<proteinExistence type="evidence at transcript level"/>
<accession>Q5YLB4</accession>
<reference key="1">
    <citation type="journal article" date="2004" name="Plant Cell">
        <title>DNA gyrase is involved in chloroplast nucleoid partitioning.</title>
        <authorList>
            <person name="Cho H.S."/>
            <person name="Lee S.S."/>
            <person name="Kim K.D."/>
            <person name="Hwang I."/>
            <person name="Lim J.-S."/>
            <person name="Park Y.-I."/>
            <person name="Pai H.-S."/>
        </authorList>
    </citation>
    <scope>NUCLEOTIDE SEQUENCE [MRNA]</scope>
    <scope>FUNCTION</scope>
    <scope>SUBCELLULAR LOCATION</scope>
    <scope>TISSUE SPECIFICITY</scope>
    <scope>DEVELOPMENTAL STAGE</scope>
</reference>
<feature type="transit peptide" description="Chloroplast and mitochondrion">
    <location>
        <begin position="1"/>
        <end status="unknown"/>
    </location>
</feature>
<feature type="chain" id="PRO_0000247950" description="DNA gyrase subunit B, chloroplastic/mitochondrial">
    <location>
        <begin status="unknown"/>
        <end position="731"/>
    </location>
</feature>
<feature type="domain" description="Toprim" evidence="2">
    <location>
        <begin position="512"/>
        <end position="619"/>
    </location>
</feature>
<feature type="binding site" evidence="2">
    <location>
        <position position="518"/>
    </location>
    <ligand>
        <name>Mg(2+)</name>
        <dbReference type="ChEBI" id="CHEBI:18420"/>
        <label>1</label>
        <note>catalytic</note>
    </ligand>
</feature>
<feature type="binding site" evidence="2">
    <location>
        <position position="592"/>
    </location>
    <ligand>
        <name>Mg(2+)</name>
        <dbReference type="ChEBI" id="CHEBI:18420"/>
        <label>1</label>
        <note>catalytic</note>
    </ligand>
</feature>
<feature type="binding site" evidence="2">
    <location>
        <position position="592"/>
    </location>
    <ligand>
        <name>Mg(2+)</name>
        <dbReference type="ChEBI" id="CHEBI:18420"/>
        <label>2</label>
    </ligand>
</feature>
<feature type="binding site" evidence="2">
    <location>
        <position position="594"/>
    </location>
    <ligand>
        <name>Mg(2+)</name>
        <dbReference type="ChEBI" id="CHEBI:18420"/>
        <label>2</label>
    </ligand>
</feature>
<feature type="site" description="Interaction with DNA" evidence="2">
    <location>
        <position position="543"/>
    </location>
</feature>
<feature type="site" description="Interaction with DNA" evidence="2">
    <location>
        <position position="546"/>
    </location>
</feature>
<dbReference type="EC" id="5.6.2.2" evidence="2"/>
<dbReference type="EMBL" id="AY351387">
    <property type="protein sequence ID" value="AAR07943.1"/>
    <property type="molecule type" value="mRNA"/>
</dbReference>
<dbReference type="SMR" id="Q5YLB4"/>
<dbReference type="GO" id="GO:0009507">
    <property type="term" value="C:chloroplast"/>
    <property type="evidence" value="ECO:0007669"/>
    <property type="project" value="UniProtKB-SubCell"/>
</dbReference>
<dbReference type="GO" id="GO:0005694">
    <property type="term" value="C:chromosome"/>
    <property type="evidence" value="ECO:0007669"/>
    <property type="project" value="InterPro"/>
</dbReference>
<dbReference type="GO" id="GO:0005739">
    <property type="term" value="C:mitochondrion"/>
    <property type="evidence" value="ECO:0007669"/>
    <property type="project" value="UniProtKB-SubCell"/>
</dbReference>
<dbReference type="GO" id="GO:0005524">
    <property type="term" value="F:ATP binding"/>
    <property type="evidence" value="ECO:0007669"/>
    <property type="project" value="UniProtKB-KW"/>
</dbReference>
<dbReference type="GO" id="GO:0003677">
    <property type="term" value="F:DNA binding"/>
    <property type="evidence" value="ECO:0007669"/>
    <property type="project" value="UniProtKB-KW"/>
</dbReference>
<dbReference type="GO" id="GO:0003918">
    <property type="term" value="F:DNA topoisomerase type II (double strand cut, ATP-hydrolyzing) activity"/>
    <property type="evidence" value="ECO:0007669"/>
    <property type="project" value="UniProtKB-EC"/>
</dbReference>
<dbReference type="GO" id="GO:0046872">
    <property type="term" value="F:metal ion binding"/>
    <property type="evidence" value="ECO:0007669"/>
    <property type="project" value="UniProtKB-KW"/>
</dbReference>
<dbReference type="GO" id="GO:0006265">
    <property type="term" value="P:DNA topological change"/>
    <property type="evidence" value="ECO:0007669"/>
    <property type="project" value="InterPro"/>
</dbReference>
<dbReference type="CDD" id="cd16928">
    <property type="entry name" value="HATPase_GyrB-like"/>
    <property type="match status" value="1"/>
</dbReference>
<dbReference type="CDD" id="cd00822">
    <property type="entry name" value="TopoII_Trans_DNA_gyrase"/>
    <property type="match status" value="1"/>
</dbReference>
<dbReference type="CDD" id="cd03366">
    <property type="entry name" value="TOPRIM_TopoIIA_GyrB"/>
    <property type="match status" value="1"/>
</dbReference>
<dbReference type="FunFam" id="3.30.230.10:FF:000005">
    <property type="entry name" value="DNA gyrase subunit B"/>
    <property type="match status" value="1"/>
</dbReference>
<dbReference type="FunFam" id="3.30.565.10:FF:000002">
    <property type="entry name" value="DNA gyrase subunit B"/>
    <property type="match status" value="1"/>
</dbReference>
<dbReference type="FunFam" id="3.40.50.670:FF:000002">
    <property type="entry name" value="DNA gyrase subunit B"/>
    <property type="match status" value="1"/>
</dbReference>
<dbReference type="Gene3D" id="3.30.230.10">
    <property type="match status" value="1"/>
</dbReference>
<dbReference type="Gene3D" id="3.40.50.670">
    <property type="match status" value="1"/>
</dbReference>
<dbReference type="Gene3D" id="3.30.565.10">
    <property type="entry name" value="Histidine kinase-like ATPase, C-terminal domain"/>
    <property type="match status" value="1"/>
</dbReference>
<dbReference type="InterPro" id="IPR002288">
    <property type="entry name" value="DNA_gyrase_B_C"/>
</dbReference>
<dbReference type="InterPro" id="IPR011557">
    <property type="entry name" value="GyrB"/>
</dbReference>
<dbReference type="InterPro" id="IPR036890">
    <property type="entry name" value="HATPase_C_sf"/>
</dbReference>
<dbReference type="InterPro" id="IPR020568">
    <property type="entry name" value="Ribosomal_Su5_D2-typ_SF"/>
</dbReference>
<dbReference type="InterPro" id="IPR014721">
    <property type="entry name" value="Ribsml_uS5_D2-typ_fold_subgr"/>
</dbReference>
<dbReference type="InterPro" id="IPR001241">
    <property type="entry name" value="Topo_IIA"/>
</dbReference>
<dbReference type="InterPro" id="IPR013760">
    <property type="entry name" value="Topo_IIA-like_dom_sf"/>
</dbReference>
<dbReference type="InterPro" id="IPR000565">
    <property type="entry name" value="Topo_IIA_B"/>
</dbReference>
<dbReference type="InterPro" id="IPR013759">
    <property type="entry name" value="Topo_IIA_B_C"/>
</dbReference>
<dbReference type="InterPro" id="IPR013506">
    <property type="entry name" value="Topo_IIA_bsu_dom2"/>
</dbReference>
<dbReference type="InterPro" id="IPR018522">
    <property type="entry name" value="TopoIIA_CS"/>
</dbReference>
<dbReference type="InterPro" id="IPR006171">
    <property type="entry name" value="TOPRIM_dom"/>
</dbReference>
<dbReference type="InterPro" id="IPR034160">
    <property type="entry name" value="TOPRIM_GyrB"/>
</dbReference>
<dbReference type="NCBIfam" id="TIGR01059">
    <property type="entry name" value="gyrB"/>
    <property type="match status" value="1"/>
</dbReference>
<dbReference type="NCBIfam" id="NF004189">
    <property type="entry name" value="PRK05644.1"/>
    <property type="match status" value="1"/>
</dbReference>
<dbReference type="PANTHER" id="PTHR45866:SF1">
    <property type="entry name" value="DNA GYRASE SUBUNIT B, MITOCHONDRIAL"/>
    <property type="match status" value="1"/>
</dbReference>
<dbReference type="PANTHER" id="PTHR45866">
    <property type="entry name" value="DNA GYRASE/TOPOISOMERASE SUBUNIT B"/>
    <property type="match status" value="1"/>
</dbReference>
<dbReference type="Pfam" id="PF00204">
    <property type="entry name" value="DNA_gyraseB"/>
    <property type="match status" value="1"/>
</dbReference>
<dbReference type="Pfam" id="PF00986">
    <property type="entry name" value="DNA_gyraseB_C"/>
    <property type="match status" value="1"/>
</dbReference>
<dbReference type="Pfam" id="PF02518">
    <property type="entry name" value="HATPase_c"/>
    <property type="match status" value="1"/>
</dbReference>
<dbReference type="Pfam" id="PF01751">
    <property type="entry name" value="Toprim"/>
    <property type="match status" value="1"/>
</dbReference>
<dbReference type="PRINTS" id="PR01159">
    <property type="entry name" value="DNAGYRASEB"/>
</dbReference>
<dbReference type="PRINTS" id="PR00418">
    <property type="entry name" value="TPI2FAMILY"/>
</dbReference>
<dbReference type="SMART" id="SM00387">
    <property type="entry name" value="HATPase_c"/>
    <property type="match status" value="1"/>
</dbReference>
<dbReference type="SMART" id="SM00433">
    <property type="entry name" value="TOP2c"/>
    <property type="match status" value="1"/>
</dbReference>
<dbReference type="SUPFAM" id="SSF55874">
    <property type="entry name" value="ATPase domain of HSP90 chaperone/DNA topoisomerase II/histidine kinase"/>
    <property type="match status" value="1"/>
</dbReference>
<dbReference type="SUPFAM" id="SSF54211">
    <property type="entry name" value="Ribosomal protein S5 domain 2-like"/>
    <property type="match status" value="1"/>
</dbReference>
<dbReference type="SUPFAM" id="SSF56719">
    <property type="entry name" value="Type II DNA topoisomerase"/>
    <property type="match status" value="1"/>
</dbReference>
<dbReference type="PROSITE" id="PS00177">
    <property type="entry name" value="TOPOISOMERASE_II"/>
    <property type="match status" value="1"/>
</dbReference>
<dbReference type="PROSITE" id="PS50880">
    <property type="entry name" value="TOPRIM"/>
    <property type="match status" value="1"/>
</dbReference>
<protein>
    <recommendedName>
        <fullName>DNA gyrase subunit B, chloroplastic/mitochondrial</fullName>
        <ecNumber evidence="2">5.6.2.2</ecNumber>
    </recommendedName>
</protein>
<gene>
    <name type="primary">GYRB</name>
</gene>
<comment type="function">
    <text evidence="3">Seems to play a critical role in chloroplast nucleoid partitioning by regulating DNA topology. A type II topoisomerase that negatively supercoils closed circular double-stranded DNA in an ATP-dependent manner.</text>
</comment>
<comment type="catalytic activity">
    <reaction evidence="2">
        <text>ATP-dependent breakage, passage and rejoining of double-stranded DNA.</text>
        <dbReference type="EC" id="5.6.2.2"/>
    </reaction>
</comment>
<comment type="cofactor">
    <cofactor evidence="2">
        <name>Mg(2+)</name>
        <dbReference type="ChEBI" id="CHEBI:18420"/>
    </cofactor>
    <cofactor evidence="2">
        <name>Mn(2+)</name>
        <dbReference type="ChEBI" id="CHEBI:29035"/>
    </cofactor>
    <cofactor evidence="2">
        <name>Ca(2+)</name>
        <dbReference type="ChEBI" id="CHEBI:29108"/>
    </cofactor>
    <text evidence="2">Binds two Mg(2+) per subunit. The magnesium ions form salt bridges with both the protein and the DNA. Can also accept other divalent metal cations, such as Mn(2+) or Ca(2+).</text>
</comment>
<comment type="subunit">
    <text evidence="1">Made up of two chains. The A chain is responsible for DNA breakage and rejoining; the B chain catalyzes ATP hydrolysis.</text>
</comment>
<comment type="subcellular location">
    <subcellularLocation>
        <location evidence="3">Plastid</location>
        <location evidence="3">Chloroplast</location>
    </subcellularLocation>
    <subcellularLocation>
        <location evidence="3">Mitochondrion</location>
    </subcellularLocation>
</comment>
<comment type="tissue specificity">
    <text evidence="3">Ubiquitous.</text>
</comment>
<comment type="developmental stage">
    <text evidence="3">Up-regulated during seed germination and leaf expansion.</text>
</comment>
<comment type="similarity">
    <text evidence="4">Belongs to the type II topoisomerase GyrB family.</text>
</comment>
<keyword id="KW-0067">ATP-binding</keyword>
<keyword id="KW-0150">Chloroplast</keyword>
<keyword id="KW-0238">DNA-binding</keyword>
<keyword id="KW-0413">Isomerase</keyword>
<keyword id="KW-0460">Magnesium</keyword>
<keyword id="KW-0479">Metal-binding</keyword>
<keyword id="KW-0496">Mitochondrion</keyword>
<keyword id="KW-0547">Nucleotide-binding</keyword>
<keyword id="KW-0934">Plastid</keyword>
<keyword id="KW-0799">Topoisomerase</keyword>
<keyword id="KW-0809">Transit peptide</keyword>
<organism>
    <name type="scientific">Nicotiana benthamiana</name>
    <dbReference type="NCBI Taxonomy" id="4100"/>
    <lineage>
        <taxon>Eukaryota</taxon>
        <taxon>Viridiplantae</taxon>
        <taxon>Streptophyta</taxon>
        <taxon>Embryophyta</taxon>
        <taxon>Tracheophyta</taxon>
        <taxon>Spermatophyta</taxon>
        <taxon>Magnoliopsida</taxon>
        <taxon>eudicotyledons</taxon>
        <taxon>Gunneridae</taxon>
        <taxon>Pentapetalae</taxon>
        <taxon>asterids</taxon>
        <taxon>lamiids</taxon>
        <taxon>Solanales</taxon>
        <taxon>Solanaceae</taxon>
        <taxon>Nicotianoideae</taxon>
        <taxon>Nicotianeae</taxon>
        <taxon>Nicotiana</taxon>
    </lineage>
</organism>
<name>GYRB_NICBE</name>
<sequence>MALLKPFPLQHSLRCMASRFLLHSHYHTHTLSFSSISLSRPSIVLNPRVINKLRRLSDAILIRNMVSLRAFMSSSTTTEAFQENTKSKGYGSEQIQVLEGLDPVRKRPGMYIGSTGPRGLHHLVYEILDNAVDEAQAGFATKIDVVLHADNSVSIADNGRGIPTELHPVTKKSSLETVLTVLHAGGKFGGSSSGYNVSGGLHGVGLSVVNALSQALEVTIWRDGKEYQQKYSRGKPITTLICHDLPVEMRDRQGTAIRFWPDKEVFTTEMQFDYNTIAGRIRELAFLNPELTIALKKEDIDPEKIQCNEYFYAGGLVEYVKWLNADKKPLHDVLGFRKEADGITIDMALQWCSDAYSDTMLGYANSIRTIDGGTHIDGVKAALTRILNNLGKKSKTIKEKDISLSGEHVREGLTCVISVKVPNPEFEGQTKTRLGNPEVRKVVDQSVQEYLTEYLELHPDVLDSILSKSLNALKAALAAKRARELVRQKSVLKSSSLPGKLADCSATNPEEAEIFIVEGDSAGGSAKQGRDRRFQAILPLRGKILNIERKDEAAMYKNEEIQNLILGLGLGVKGEDFKKEALRYHKIIILTDADVDGAHIRTLLLTFFFRYQRALFEEGCIYVGVPPLYKVERGKQVYYCYDDAELKKVQRSFPSNASYNIQRFKGLGEMMPAQLWETTMNPETRLLKQLVVEDAAEANVVFSSLMGSRVDIRKQLIQNSASMMNLEQLDI</sequence>
<evidence type="ECO:0000250" key="1">
    <source>
        <dbReference type="UniProtKB" id="P0AES6"/>
    </source>
</evidence>
<evidence type="ECO:0000255" key="2">
    <source>
        <dbReference type="PROSITE-ProRule" id="PRU00995"/>
    </source>
</evidence>
<evidence type="ECO:0000269" key="3">
    <source>
    </source>
</evidence>
<evidence type="ECO:0000305" key="4"/>